<keyword id="KW-0066">ATP synthesis</keyword>
<keyword id="KW-0997">Cell inner membrane</keyword>
<keyword id="KW-1003">Cell membrane</keyword>
<keyword id="KW-0139">CF(1)</keyword>
<keyword id="KW-0375">Hydrogen ion transport</keyword>
<keyword id="KW-0406">Ion transport</keyword>
<keyword id="KW-0472">Membrane</keyword>
<keyword id="KW-1185">Reference proteome</keyword>
<keyword id="KW-0813">Transport</keyword>
<organism>
    <name type="scientific">Nitrobacter winogradskyi (strain ATCC 25391 / DSM 10237 / CIP 104748 / NCIMB 11846 / Nb-255)</name>
    <dbReference type="NCBI Taxonomy" id="323098"/>
    <lineage>
        <taxon>Bacteria</taxon>
        <taxon>Pseudomonadati</taxon>
        <taxon>Pseudomonadota</taxon>
        <taxon>Alphaproteobacteria</taxon>
        <taxon>Hyphomicrobiales</taxon>
        <taxon>Nitrobacteraceae</taxon>
        <taxon>Nitrobacter</taxon>
    </lineage>
</organism>
<proteinExistence type="inferred from homology"/>
<protein>
    <recommendedName>
        <fullName evidence="1">ATP synthase gamma chain</fullName>
    </recommendedName>
    <alternativeName>
        <fullName evidence="1">ATP synthase F1 sector gamma subunit</fullName>
    </alternativeName>
    <alternativeName>
        <fullName evidence="1">F-ATPase gamma subunit</fullName>
    </alternativeName>
</protein>
<feature type="chain" id="PRO_1000053271" description="ATP synthase gamma chain">
    <location>
        <begin position="1"/>
        <end position="292"/>
    </location>
</feature>
<sequence>MASLKDMRVRIASTKATQKITKAMQMVAASKLRRAQNAAEAARPYAEKMDTVISNIASAAAGSPNASPLLAGTGKDQVHLLLVCTGERGLSGAFNSAIVRLARDRAFALMNQGKEVKFFCVGRKGYEQLRRIFEKQIVETVELRTVRQLGFVNAEDIARKVLARFDAGEFDVCTLFYSRFQSVIAQVPTAQQVIPLAVEDAARSDGPAPSYEYEPEEDEILNGLLPRNLAVQIFRALLENNASFYGAQMTAMDNATRNAGEMIRKQTLIYNRTRQAMITKELIEIISGAEAV</sequence>
<reference key="1">
    <citation type="journal article" date="2006" name="Appl. Environ. Microbiol.">
        <title>Genome sequence of the chemolithoautotrophic nitrite-oxidizing bacterium Nitrobacter winogradskyi Nb-255.</title>
        <authorList>
            <person name="Starkenburg S.R."/>
            <person name="Chain P.S.G."/>
            <person name="Sayavedra-Soto L.A."/>
            <person name="Hauser L."/>
            <person name="Land M.L."/>
            <person name="Larimer F.W."/>
            <person name="Malfatti S.A."/>
            <person name="Klotz M.G."/>
            <person name="Bottomley P.J."/>
            <person name="Arp D.J."/>
            <person name="Hickey W.J."/>
        </authorList>
    </citation>
    <scope>NUCLEOTIDE SEQUENCE [LARGE SCALE GENOMIC DNA]</scope>
    <source>
        <strain>ATCC 25391 / DSM 10237 / CIP 104748 / NCIMB 11846 / Nb-255</strain>
    </source>
</reference>
<dbReference type="EMBL" id="CP000115">
    <property type="protein sequence ID" value="ABA03698.1"/>
    <property type="molecule type" value="Genomic_DNA"/>
</dbReference>
<dbReference type="RefSeq" id="WP_011313762.1">
    <property type="nucleotide sequence ID" value="NC_007406.1"/>
</dbReference>
<dbReference type="SMR" id="Q3SVJ3"/>
<dbReference type="STRING" id="323098.Nwi_0431"/>
<dbReference type="KEGG" id="nwi:Nwi_0431"/>
<dbReference type="eggNOG" id="COG0224">
    <property type="taxonomic scope" value="Bacteria"/>
</dbReference>
<dbReference type="HOGENOM" id="CLU_050669_0_1_5"/>
<dbReference type="OrthoDB" id="9812769at2"/>
<dbReference type="Proteomes" id="UP000002531">
    <property type="component" value="Chromosome"/>
</dbReference>
<dbReference type="GO" id="GO:0005886">
    <property type="term" value="C:plasma membrane"/>
    <property type="evidence" value="ECO:0007669"/>
    <property type="project" value="UniProtKB-SubCell"/>
</dbReference>
<dbReference type="GO" id="GO:0045259">
    <property type="term" value="C:proton-transporting ATP synthase complex"/>
    <property type="evidence" value="ECO:0007669"/>
    <property type="project" value="UniProtKB-KW"/>
</dbReference>
<dbReference type="GO" id="GO:0005524">
    <property type="term" value="F:ATP binding"/>
    <property type="evidence" value="ECO:0007669"/>
    <property type="project" value="UniProtKB-UniRule"/>
</dbReference>
<dbReference type="GO" id="GO:0046933">
    <property type="term" value="F:proton-transporting ATP synthase activity, rotational mechanism"/>
    <property type="evidence" value="ECO:0007669"/>
    <property type="project" value="UniProtKB-UniRule"/>
</dbReference>
<dbReference type="GO" id="GO:0042777">
    <property type="term" value="P:proton motive force-driven plasma membrane ATP synthesis"/>
    <property type="evidence" value="ECO:0007669"/>
    <property type="project" value="UniProtKB-UniRule"/>
</dbReference>
<dbReference type="CDD" id="cd12151">
    <property type="entry name" value="F1-ATPase_gamma"/>
    <property type="match status" value="1"/>
</dbReference>
<dbReference type="FunFam" id="1.10.287.80:FF:000001">
    <property type="entry name" value="ATP synthase gamma chain"/>
    <property type="match status" value="1"/>
</dbReference>
<dbReference type="Gene3D" id="3.40.1380.10">
    <property type="match status" value="1"/>
</dbReference>
<dbReference type="Gene3D" id="1.10.287.80">
    <property type="entry name" value="ATP synthase, gamma subunit, helix hairpin domain"/>
    <property type="match status" value="1"/>
</dbReference>
<dbReference type="HAMAP" id="MF_00815">
    <property type="entry name" value="ATP_synth_gamma_bact"/>
    <property type="match status" value="1"/>
</dbReference>
<dbReference type="InterPro" id="IPR035968">
    <property type="entry name" value="ATP_synth_F1_ATPase_gsu"/>
</dbReference>
<dbReference type="InterPro" id="IPR000131">
    <property type="entry name" value="ATP_synth_F1_gsu"/>
</dbReference>
<dbReference type="InterPro" id="IPR023632">
    <property type="entry name" value="ATP_synth_F1_gsu_CS"/>
</dbReference>
<dbReference type="NCBIfam" id="TIGR01146">
    <property type="entry name" value="ATPsyn_F1gamma"/>
    <property type="match status" value="1"/>
</dbReference>
<dbReference type="NCBIfam" id="NF004146">
    <property type="entry name" value="PRK05621.1-4"/>
    <property type="match status" value="1"/>
</dbReference>
<dbReference type="PANTHER" id="PTHR11693">
    <property type="entry name" value="ATP SYNTHASE GAMMA CHAIN"/>
    <property type="match status" value="1"/>
</dbReference>
<dbReference type="PANTHER" id="PTHR11693:SF22">
    <property type="entry name" value="ATP SYNTHASE SUBUNIT GAMMA, MITOCHONDRIAL"/>
    <property type="match status" value="1"/>
</dbReference>
<dbReference type="Pfam" id="PF00231">
    <property type="entry name" value="ATP-synt"/>
    <property type="match status" value="1"/>
</dbReference>
<dbReference type="PIRSF" id="PIRSF039089">
    <property type="entry name" value="ATP_synthase_gamma"/>
    <property type="match status" value="1"/>
</dbReference>
<dbReference type="PRINTS" id="PR00126">
    <property type="entry name" value="ATPASEGAMMA"/>
</dbReference>
<dbReference type="SUPFAM" id="SSF52943">
    <property type="entry name" value="ATP synthase (F1-ATPase), gamma subunit"/>
    <property type="match status" value="1"/>
</dbReference>
<dbReference type="PROSITE" id="PS00153">
    <property type="entry name" value="ATPASE_GAMMA"/>
    <property type="match status" value="1"/>
</dbReference>
<gene>
    <name evidence="1" type="primary">atpG</name>
    <name type="ordered locus">Nwi_0431</name>
</gene>
<accession>Q3SVJ3</accession>
<evidence type="ECO:0000255" key="1">
    <source>
        <dbReference type="HAMAP-Rule" id="MF_00815"/>
    </source>
</evidence>
<name>ATPG_NITWN</name>
<comment type="function">
    <text evidence="1">Produces ATP from ADP in the presence of a proton gradient across the membrane. The gamma chain is believed to be important in regulating ATPase activity and the flow of protons through the CF(0) complex.</text>
</comment>
<comment type="subunit">
    <text evidence="1">F-type ATPases have 2 components, CF(1) - the catalytic core - and CF(0) - the membrane proton channel. CF(1) has five subunits: alpha(3), beta(3), gamma(1), delta(1), epsilon(1). CF(0) has three main subunits: a, b and c.</text>
</comment>
<comment type="subcellular location">
    <subcellularLocation>
        <location evidence="1">Cell inner membrane</location>
        <topology evidence="1">Peripheral membrane protein</topology>
    </subcellularLocation>
</comment>
<comment type="similarity">
    <text evidence="1">Belongs to the ATPase gamma chain family.</text>
</comment>